<comment type="subcellular location">
    <subcellularLocation>
        <location evidence="1">Membrane</location>
        <topology evidence="1">Single-pass type I membrane protein</topology>
    </subcellularLocation>
</comment>
<comment type="tissue specificity">
    <text evidence="4">Highly expressed in large intestine, small intestine, rumen, and kidney tissues.</text>
</comment>
<sequence>MASSQPPLPPPPPPLLLLALLLLLKVSDTSSSVSTATSTASETDNLTSKPLTSSFSSSSPTVWEKQTSQEKPETASTSHPDSSSSESTISHSPSNSGTTSTTQPTSSQPEPDTHPSSGSPSSEHTVTSPSLGSVSLATLPWSPTHPKPSTGPPSVSLATTDRTFETSGYAPGDSGVPRLHRNPGVVVAVCLLVSALLIGGAIMAVRRCHNGVSEFQKLDEGLVSRRSSSAHHTLP</sequence>
<accession>Q1ECS6</accession>
<proteinExistence type="evidence at transcript level"/>
<feature type="signal peptide" evidence="1">
    <location>
        <begin position="1"/>
        <end position="31"/>
    </location>
</feature>
<feature type="chain" id="PRO_5004188732" description="Protein CIST1" evidence="1">
    <location>
        <begin position="32"/>
        <end position="235"/>
    </location>
</feature>
<feature type="topological domain" description="Extracellular" evidence="6">
    <location>
        <begin position="32"/>
        <end position="184"/>
    </location>
</feature>
<feature type="transmembrane region" description="Helical" evidence="1">
    <location>
        <begin position="185"/>
        <end position="205"/>
    </location>
</feature>
<feature type="topological domain" description="Cytoplasmic" evidence="6">
    <location>
        <begin position="206"/>
        <end position="235"/>
    </location>
</feature>
<feature type="region of interest" description="Disordered" evidence="3">
    <location>
        <begin position="28"/>
        <end position="159"/>
    </location>
</feature>
<feature type="compositionally biased region" description="Low complexity" evidence="3">
    <location>
        <begin position="28"/>
        <end position="61"/>
    </location>
</feature>
<feature type="compositionally biased region" description="Low complexity" evidence="3">
    <location>
        <begin position="76"/>
        <end position="110"/>
    </location>
</feature>
<feature type="compositionally biased region" description="Polar residues" evidence="3">
    <location>
        <begin position="114"/>
        <end position="136"/>
    </location>
</feature>
<feature type="glycosylation site" description="N-linked (GlcNAc...) asparagine" evidence="2">
    <location>
        <position position="45"/>
    </location>
</feature>
<keyword id="KW-0325">Glycoprotein</keyword>
<keyword id="KW-0472">Membrane</keyword>
<keyword id="KW-1185">Reference proteome</keyword>
<keyword id="KW-0732">Signal</keyword>
<keyword id="KW-0812">Transmembrane</keyword>
<keyword id="KW-1133">Transmembrane helix</keyword>
<dbReference type="EMBL" id="NKLS02000007">
    <property type="status" value="NOT_ANNOTATED_CDS"/>
    <property type="molecule type" value="Genomic_DNA"/>
</dbReference>
<dbReference type="EMBL" id="BK005441">
    <property type="protein sequence ID" value="DAA05613.1"/>
    <property type="molecule type" value="mRNA"/>
</dbReference>
<dbReference type="RefSeq" id="NP_001068739.1">
    <property type="nucleotide sequence ID" value="NM_001075271.1"/>
</dbReference>
<dbReference type="GlyGen" id="Q1ECS6">
    <property type="glycosylation" value="1 site"/>
</dbReference>
<dbReference type="GeneID" id="506589"/>
<dbReference type="KEGG" id="bta:506589"/>
<dbReference type="CTD" id="729966"/>
<dbReference type="OrthoDB" id="9634707at2759"/>
<dbReference type="Proteomes" id="UP000009136">
    <property type="component" value="Unplaced"/>
</dbReference>
<dbReference type="GO" id="GO:0016020">
    <property type="term" value="C:membrane"/>
    <property type="evidence" value="ECO:0007669"/>
    <property type="project" value="UniProtKB-SubCell"/>
</dbReference>
<evidence type="ECO:0000255" key="1"/>
<evidence type="ECO:0000255" key="2">
    <source>
        <dbReference type="PROSITE-ProRule" id="PRU00498"/>
    </source>
</evidence>
<evidence type="ECO:0000256" key="3">
    <source>
        <dbReference type="SAM" id="MobiDB-lite"/>
    </source>
</evidence>
<evidence type="ECO:0000269" key="4">
    <source>
    </source>
</evidence>
<evidence type="ECO:0000303" key="5">
    <source>
    </source>
</evidence>
<evidence type="ECO:0000305" key="6"/>
<name>CIST1_BOVIN</name>
<protein>
    <recommendedName>
        <fullName evidence="6">Protein CIST1</fullName>
    </recommendedName>
    <alternativeName>
        <fullName evidence="5">Intestine-specific transcript 1 protein</fullName>
    </alternativeName>
</protein>
<reference key="1">
    <citation type="journal article" date="2009" name="Genome Biol.">
        <title>A whole-genome assembly of the domestic cow, Bos taurus.</title>
        <authorList>
            <person name="Zimin A.V."/>
            <person name="Delcher A.L."/>
            <person name="Florea L."/>
            <person name="Kelley D.R."/>
            <person name="Schatz M.C."/>
            <person name="Puiu D."/>
            <person name="Hanrahan F."/>
            <person name="Pertea G."/>
            <person name="Van Tassell C.P."/>
            <person name="Sonstegard T.S."/>
            <person name="Marcais G."/>
            <person name="Roberts M."/>
            <person name="Subramanian P."/>
            <person name="Yorke J.A."/>
            <person name="Salzberg S.L."/>
        </authorList>
    </citation>
    <scope>NUCLEOTIDE SEQUENCE [LARGE SCALE GENOMIC DNA]</scope>
</reference>
<reference key="2">
    <citation type="journal article" date="2006" name="Physiol. Genomics">
        <title>Discovery of eight novel divergent homologs expressed in cattle placenta.</title>
        <authorList>
            <person name="Larson J.H."/>
            <person name="Kumar C.G."/>
            <person name="Everts R.E."/>
            <person name="Green C.A."/>
            <person name="Everts-van der Wind A."/>
            <person name="Band M.R."/>
            <person name="Lewin H.A."/>
        </authorList>
    </citation>
    <scope>IDENTIFICATION</scope>
    <scope>TISSUE SPECIFICITY</scope>
</reference>
<gene>
    <name type="primary">CIST1</name>
</gene>
<organism>
    <name type="scientific">Bos taurus</name>
    <name type="common">Bovine</name>
    <dbReference type="NCBI Taxonomy" id="9913"/>
    <lineage>
        <taxon>Eukaryota</taxon>
        <taxon>Metazoa</taxon>
        <taxon>Chordata</taxon>
        <taxon>Craniata</taxon>
        <taxon>Vertebrata</taxon>
        <taxon>Euteleostomi</taxon>
        <taxon>Mammalia</taxon>
        <taxon>Eutheria</taxon>
        <taxon>Laurasiatheria</taxon>
        <taxon>Artiodactyla</taxon>
        <taxon>Ruminantia</taxon>
        <taxon>Pecora</taxon>
        <taxon>Bovidae</taxon>
        <taxon>Bovinae</taxon>
        <taxon>Bos</taxon>
    </lineage>
</organism>